<sequence length="209" mass="23844">MSERGLLIVFSGPSGVGKGTVRQEIFSTPDHKFDYSVSMTTRPQRPGEVDGVDYFFRTREEFEALIKEGQMLEYAEYVGNYYGTPLSYVNETLDKGIDVFLEIEVQGALQVKSKVPDGVFIFLTPPDLEELEERLVGRGTDSPEVIAQRIERAKEEIALMREYDYAVVNDQVSLAAERVKRVIEAEHYRVDRVIGRYTNMVKETDKKLS</sequence>
<evidence type="ECO:0000255" key="1">
    <source>
        <dbReference type="HAMAP-Rule" id="MF_00328"/>
    </source>
</evidence>
<accession>Q3K368</accession>
<dbReference type="EC" id="2.7.4.8" evidence="1"/>
<dbReference type="EMBL" id="CP000114">
    <property type="protein sequence ID" value="ABA44845.1"/>
    <property type="molecule type" value="Genomic_DNA"/>
</dbReference>
<dbReference type="RefSeq" id="WP_000003861.1">
    <property type="nucleotide sequence ID" value="NC_007432.1"/>
</dbReference>
<dbReference type="SMR" id="Q3K368"/>
<dbReference type="GeneID" id="66885285"/>
<dbReference type="KEGG" id="sak:SAK_0383"/>
<dbReference type="HOGENOM" id="CLU_001715_1_0_9"/>
<dbReference type="GO" id="GO:0005829">
    <property type="term" value="C:cytosol"/>
    <property type="evidence" value="ECO:0007669"/>
    <property type="project" value="TreeGrafter"/>
</dbReference>
<dbReference type="GO" id="GO:0005524">
    <property type="term" value="F:ATP binding"/>
    <property type="evidence" value="ECO:0007669"/>
    <property type="project" value="UniProtKB-UniRule"/>
</dbReference>
<dbReference type="GO" id="GO:0004385">
    <property type="term" value="F:guanylate kinase activity"/>
    <property type="evidence" value="ECO:0007669"/>
    <property type="project" value="UniProtKB-UniRule"/>
</dbReference>
<dbReference type="CDD" id="cd00071">
    <property type="entry name" value="GMPK"/>
    <property type="match status" value="1"/>
</dbReference>
<dbReference type="FunFam" id="3.40.50.300:FF:000855">
    <property type="entry name" value="Guanylate kinase"/>
    <property type="match status" value="1"/>
</dbReference>
<dbReference type="FunFam" id="3.30.63.10:FF:000002">
    <property type="entry name" value="Guanylate kinase 1"/>
    <property type="match status" value="1"/>
</dbReference>
<dbReference type="Gene3D" id="3.30.63.10">
    <property type="entry name" value="Guanylate Kinase phosphate binding domain"/>
    <property type="match status" value="1"/>
</dbReference>
<dbReference type="Gene3D" id="3.40.50.300">
    <property type="entry name" value="P-loop containing nucleotide triphosphate hydrolases"/>
    <property type="match status" value="2"/>
</dbReference>
<dbReference type="HAMAP" id="MF_00328">
    <property type="entry name" value="Guanylate_kinase"/>
    <property type="match status" value="1"/>
</dbReference>
<dbReference type="InterPro" id="IPR008145">
    <property type="entry name" value="GK/Ca_channel_bsu"/>
</dbReference>
<dbReference type="InterPro" id="IPR008144">
    <property type="entry name" value="Guanylate_kin-like_dom"/>
</dbReference>
<dbReference type="InterPro" id="IPR017665">
    <property type="entry name" value="Guanylate_kinase"/>
</dbReference>
<dbReference type="InterPro" id="IPR020590">
    <property type="entry name" value="Guanylate_kinase_CS"/>
</dbReference>
<dbReference type="InterPro" id="IPR027417">
    <property type="entry name" value="P-loop_NTPase"/>
</dbReference>
<dbReference type="NCBIfam" id="TIGR03263">
    <property type="entry name" value="guanyl_kin"/>
    <property type="match status" value="1"/>
</dbReference>
<dbReference type="PANTHER" id="PTHR23117:SF13">
    <property type="entry name" value="GUANYLATE KINASE"/>
    <property type="match status" value="1"/>
</dbReference>
<dbReference type="PANTHER" id="PTHR23117">
    <property type="entry name" value="GUANYLATE KINASE-RELATED"/>
    <property type="match status" value="1"/>
</dbReference>
<dbReference type="Pfam" id="PF00625">
    <property type="entry name" value="Guanylate_kin"/>
    <property type="match status" value="1"/>
</dbReference>
<dbReference type="SMART" id="SM00072">
    <property type="entry name" value="GuKc"/>
    <property type="match status" value="1"/>
</dbReference>
<dbReference type="SUPFAM" id="SSF52540">
    <property type="entry name" value="P-loop containing nucleoside triphosphate hydrolases"/>
    <property type="match status" value="1"/>
</dbReference>
<dbReference type="PROSITE" id="PS00856">
    <property type="entry name" value="GUANYLATE_KINASE_1"/>
    <property type="match status" value="1"/>
</dbReference>
<dbReference type="PROSITE" id="PS50052">
    <property type="entry name" value="GUANYLATE_KINASE_2"/>
    <property type="match status" value="1"/>
</dbReference>
<reference key="1">
    <citation type="journal article" date="2005" name="Proc. Natl. Acad. Sci. U.S.A.">
        <title>Genome analysis of multiple pathogenic isolates of Streptococcus agalactiae: implications for the microbial 'pan-genome'.</title>
        <authorList>
            <person name="Tettelin H."/>
            <person name="Masignani V."/>
            <person name="Cieslewicz M.J."/>
            <person name="Donati C."/>
            <person name="Medini D."/>
            <person name="Ward N.L."/>
            <person name="Angiuoli S.V."/>
            <person name="Crabtree J."/>
            <person name="Jones A.L."/>
            <person name="Durkin A.S."/>
            <person name="DeBoy R.T."/>
            <person name="Davidsen T.M."/>
            <person name="Mora M."/>
            <person name="Scarselli M."/>
            <person name="Margarit y Ros I."/>
            <person name="Peterson J.D."/>
            <person name="Hauser C.R."/>
            <person name="Sundaram J.P."/>
            <person name="Nelson W.C."/>
            <person name="Madupu R."/>
            <person name="Brinkac L.M."/>
            <person name="Dodson R.J."/>
            <person name="Rosovitz M.J."/>
            <person name="Sullivan S.A."/>
            <person name="Daugherty S.C."/>
            <person name="Haft D.H."/>
            <person name="Selengut J."/>
            <person name="Gwinn M.L."/>
            <person name="Zhou L."/>
            <person name="Zafar N."/>
            <person name="Khouri H."/>
            <person name="Radune D."/>
            <person name="Dimitrov G."/>
            <person name="Watkins K."/>
            <person name="O'Connor K.J."/>
            <person name="Smith S."/>
            <person name="Utterback T.R."/>
            <person name="White O."/>
            <person name="Rubens C.E."/>
            <person name="Grandi G."/>
            <person name="Madoff L.C."/>
            <person name="Kasper D.L."/>
            <person name="Telford J.L."/>
            <person name="Wessels M.R."/>
            <person name="Rappuoli R."/>
            <person name="Fraser C.M."/>
        </authorList>
    </citation>
    <scope>NUCLEOTIDE SEQUENCE [LARGE SCALE GENOMIC DNA]</scope>
    <source>
        <strain>ATCC 27591 / A909 / CDC SS700</strain>
    </source>
</reference>
<protein>
    <recommendedName>
        <fullName evidence="1">Guanylate kinase</fullName>
        <ecNumber evidence="1">2.7.4.8</ecNumber>
    </recommendedName>
    <alternativeName>
        <fullName evidence="1">GMP kinase</fullName>
    </alternativeName>
</protein>
<name>KGUA_STRA1</name>
<gene>
    <name evidence="1" type="primary">gmk</name>
    <name type="ordered locus">SAK_0383</name>
</gene>
<feature type="chain" id="PRO_0000266412" description="Guanylate kinase">
    <location>
        <begin position="1"/>
        <end position="209"/>
    </location>
</feature>
<feature type="domain" description="Guanylate kinase-like" evidence="1">
    <location>
        <begin position="5"/>
        <end position="184"/>
    </location>
</feature>
<feature type="binding site" evidence="1">
    <location>
        <begin position="12"/>
        <end position="19"/>
    </location>
    <ligand>
        <name>ATP</name>
        <dbReference type="ChEBI" id="CHEBI:30616"/>
    </ligand>
</feature>
<comment type="function">
    <text evidence="1">Essential for recycling GMP and indirectly, cGMP.</text>
</comment>
<comment type="catalytic activity">
    <reaction evidence="1">
        <text>GMP + ATP = GDP + ADP</text>
        <dbReference type="Rhea" id="RHEA:20780"/>
        <dbReference type="ChEBI" id="CHEBI:30616"/>
        <dbReference type="ChEBI" id="CHEBI:58115"/>
        <dbReference type="ChEBI" id="CHEBI:58189"/>
        <dbReference type="ChEBI" id="CHEBI:456216"/>
        <dbReference type="EC" id="2.7.4.8"/>
    </reaction>
</comment>
<comment type="subcellular location">
    <subcellularLocation>
        <location evidence="1">Cytoplasm</location>
    </subcellularLocation>
</comment>
<comment type="similarity">
    <text evidence="1">Belongs to the guanylate kinase family.</text>
</comment>
<keyword id="KW-0067">ATP-binding</keyword>
<keyword id="KW-0963">Cytoplasm</keyword>
<keyword id="KW-0418">Kinase</keyword>
<keyword id="KW-0547">Nucleotide-binding</keyword>
<keyword id="KW-0808">Transferase</keyword>
<organism>
    <name type="scientific">Streptococcus agalactiae serotype Ia (strain ATCC 27591 / A909 / CDC SS700)</name>
    <dbReference type="NCBI Taxonomy" id="205921"/>
    <lineage>
        <taxon>Bacteria</taxon>
        <taxon>Bacillati</taxon>
        <taxon>Bacillota</taxon>
        <taxon>Bacilli</taxon>
        <taxon>Lactobacillales</taxon>
        <taxon>Streptococcaceae</taxon>
        <taxon>Streptococcus</taxon>
    </lineage>
</organism>
<proteinExistence type="inferred from homology"/>